<gene>
    <name type="primary">dph2</name>
    <name type="ORF">AN5179</name>
</gene>
<organism>
    <name type="scientific">Emericella nidulans (strain FGSC A4 / ATCC 38163 / CBS 112.46 / NRRL 194 / M139)</name>
    <name type="common">Aspergillus nidulans</name>
    <dbReference type="NCBI Taxonomy" id="227321"/>
    <lineage>
        <taxon>Eukaryota</taxon>
        <taxon>Fungi</taxon>
        <taxon>Dikarya</taxon>
        <taxon>Ascomycota</taxon>
        <taxon>Pezizomycotina</taxon>
        <taxon>Eurotiomycetes</taxon>
        <taxon>Eurotiomycetidae</taxon>
        <taxon>Eurotiales</taxon>
        <taxon>Aspergillaceae</taxon>
        <taxon>Aspergillus</taxon>
        <taxon>Aspergillus subgen. Nidulantes</taxon>
    </lineage>
</organism>
<comment type="function">
    <text evidence="1">Required for the first step of diphthamide biosynthesis, a post-translational modification of histidine which occurs in elongation factor 2. Dph1 and dph2 transfer a 3-amino-3-carboxypropyl (ACP) group from S-adenosyl-L-methionine (SAM) to a histidine residue, the reaction is assisted by a reduction system comprising dph3 and a NADH-dependent reductase, predominantly cbr1 (By similarity). Facilitates the reduction of the catalytic iron-sulfur cluster found in the dph1 subunit (By similarity).</text>
</comment>
<comment type="cofactor">
    <cofactor evidence="1">
        <name>[4Fe-4S] cluster</name>
        <dbReference type="ChEBI" id="CHEBI:49883"/>
    </cofactor>
    <text evidence="1">Binds 1 [4Fe-4S] cluster per subunit. The cluster facilitates the reduction of the catalytic iron-sulfur cluster in the dph1 subunit.</text>
</comment>
<comment type="pathway">
    <text evidence="1">Protein modification; peptidyl-diphthamide biosynthesis.</text>
</comment>
<comment type="subunit">
    <text evidence="1">Component of the 2-(3-amino-3-carboxypropyl)histidine synthase complex composed of dph1, dph2, dph3 and a NADH-dependent reductase, predominantly cbr1.</text>
</comment>
<comment type="subcellular location">
    <subcellularLocation>
        <location evidence="1">Cytoplasm</location>
    </subcellularLocation>
</comment>
<comment type="similarity">
    <text evidence="3">Belongs to the DPH1/DPH2 family. DPH2 subfamily.</text>
</comment>
<evidence type="ECO:0000250" key="1">
    <source>
        <dbReference type="UniProtKB" id="P32461"/>
    </source>
</evidence>
<evidence type="ECO:0000256" key="2">
    <source>
        <dbReference type="SAM" id="MobiDB-lite"/>
    </source>
</evidence>
<evidence type="ECO:0000305" key="3"/>
<reference key="1">
    <citation type="journal article" date="2005" name="Nature">
        <title>Sequencing of Aspergillus nidulans and comparative analysis with A. fumigatus and A. oryzae.</title>
        <authorList>
            <person name="Galagan J.E."/>
            <person name="Calvo S.E."/>
            <person name="Cuomo C."/>
            <person name="Ma L.-J."/>
            <person name="Wortman J.R."/>
            <person name="Batzoglou S."/>
            <person name="Lee S.-I."/>
            <person name="Bastuerkmen M."/>
            <person name="Spevak C.C."/>
            <person name="Clutterbuck J."/>
            <person name="Kapitonov V."/>
            <person name="Jurka J."/>
            <person name="Scazzocchio C."/>
            <person name="Farman M.L."/>
            <person name="Butler J."/>
            <person name="Purcell S."/>
            <person name="Harris S."/>
            <person name="Braus G.H."/>
            <person name="Draht O."/>
            <person name="Busch S."/>
            <person name="D'Enfert C."/>
            <person name="Bouchier C."/>
            <person name="Goldman G.H."/>
            <person name="Bell-Pedersen D."/>
            <person name="Griffiths-Jones S."/>
            <person name="Doonan J.H."/>
            <person name="Yu J."/>
            <person name="Vienken K."/>
            <person name="Pain A."/>
            <person name="Freitag M."/>
            <person name="Selker E.U."/>
            <person name="Archer D.B."/>
            <person name="Penalva M.A."/>
            <person name="Oakley B.R."/>
            <person name="Momany M."/>
            <person name="Tanaka T."/>
            <person name="Kumagai T."/>
            <person name="Asai K."/>
            <person name="Machida M."/>
            <person name="Nierman W.C."/>
            <person name="Denning D.W."/>
            <person name="Caddick M.X."/>
            <person name="Hynes M."/>
            <person name="Paoletti M."/>
            <person name="Fischer R."/>
            <person name="Miller B.L."/>
            <person name="Dyer P.S."/>
            <person name="Sachs M.S."/>
            <person name="Osmani S.A."/>
            <person name="Birren B.W."/>
        </authorList>
    </citation>
    <scope>NUCLEOTIDE SEQUENCE [LARGE SCALE GENOMIC DNA]</scope>
    <source>
        <strain>FGSC A4 / ATCC 38163 / CBS 112.46 / NRRL 194 / M139</strain>
    </source>
</reference>
<reference key="2">
    <citation type="journal article" date="2009" name="Fungal Genet. Biol.">
        <title>The 2008 update of the Aspergillus nidulans genome annotation: a community effort.</title>
        <authorList>
            <person name="Wortman J.R."/>
            <person name="Gilsenan J.M."/>
            <person name="Joardar V."/>
            <person name="Deegan J."/>
            <person name="Clutterbuck J."/>
            <person name="Andersen M.R."/>
            <person name="Archer D."/>
            <person name="Bencina M."/>
            <person name="Braus G."/>
            <person name="Coutinho P."/>
            <person name="von Dohren H."/>
            <person name="Doonan J."/>
            <person name="Driessen A.J."/>
            <person name="Durek P."/>
            <person name="Espeso E."/>
            <person name="Fekete E."/>
            <person name="Flipphi M."/>
            <person name="Estrada C.G."/>
            <person name="Geysens S."/>
            <person name="Goldman G."/>
            <person name="de Groot P.W."/>
            <person name="Hansen K."/>
            <person name="Harris S.D."/>
            <person name="Heinekamp T."/>
            <person name="Helmstaedt K."/>
            <person name="Henrissat B."/>
            <person name="Hofmann G."/>
            <person name="Homan T."/>
            <person name="Horio T."/>
            <person name="Horiuchi H."/>
            <person name="James S."/>
            <person name="Jones M."/>
            <person name="Karaffa L."/>
            <person name="Karanyi Z."/>
            <person name="Kato M."/>
            <person name="Keller N."/>
            <person name="Kelly D.E."/>
            <person name="Kiel J.A."/>
            <person name="Kim J.M."/>
            <person name="van der Klei I.J."/>
            <person name="Klis F.M."/>
            <person name="Kovalchuk A."/>
            <person name="Krasevec N."/>
            <person name="Kubicek C.P."/>
            <person name="Liu B."/>
            <person name="Maccabe A."/>
            <person name="Meyer V."/>
            <person name="Mirabito P."/>
            <person name="Miskei M."/>
            <person name="Mos M."/>
            <person name="Mullins J."/>
            <person name="Nelson D.R."/>
            <person name="Nielsen J."/>
            <person name="Oakley B.R."/>
            <person name="Osmani S.A."/>
            <person name="Pakula T."/>
            <person name="Paszewski A."/>
            <person name="Paulsen I."/>
            <person name="Pilsyk S."/>
            <person name="Pocsi I."/>
            <person name="Punt P.J."/>
            <person name="Ram A.F."/>
            <person name="Ren Q."/>
            <person name="Robellet X."/>
            <person name="Robson G."/>
            <person name="Seiboth B."/>
            <person name="van Solingen P."/>
            <person name="Specht T."/>
            <person name="Sun J."/>
            <person name="Taheri-Talesh N."/>
            <person name="Takeshita N."/>
            <person name="Ussery D."/>
            <person name="vanKuyk P.A."/>
            <person name="Visser H."/>
            <person name="van de Vondervoort P.J."/>
            <person name="de Vries R.P."/>
            <person name="Walton J."/>
            <person name="Xiang X."/>
            <person name="Xiong Y."/>
            <person name="Zeng A.P."/>
            <person name="Brandt B.W."/>
            <person name="Cornell M.J."/>
            <person name="van den Hondel C.A."/>
            <person name="Visser J."/>
            <person name="Oliver S.G."/>
            <person name="Turner G."/>
        </authorList>
    </citation>
    <scope>GENOME REANNOTATION</scope>
    <source>
        <strain>FGSC A4 / ATCC 38163 / CBS 112.46 / NRRL 194 / M139</strain>
    </source>
</reference>
<feature type="chain" id="PRO_0000083388" description="2-(3-amino-3-carboxypropyl)histidine synthase subunit 2">
    <location>
        <begin position="1"/>
        <end position="582"/>
    </location>
</feature>
<feature type="region of interest" description="Disordered" evidence="2">
    <location>
        <begin position="416"/>
        <end position="467"/>
    </location>
</feature>
<feature type="binding site" evidence="1">
    <location>
        <position position="135"/>
    </location>
    <ligand>
        <name>[4Fe-4S] cluster</name>
        <dbReference type="ChEBI" id="CHEBI:49883"/>
    </ligand>
</feature>
<feature type="binding site" evidence="1">
    <location>
        <position position="156"/>
    </location>
    <ligand>
        <name>[4Fe-4S] cluster</name>
        <dbReference type="ChEBI" id="CHEBI:49883"/>
    </ligand>
</feature>
<feature type="binding site" evidence="1">
    <location>
        <position position="373"/>
    </location>
    <ligand>
        <name>[4Fe-4S] cluster</name>
        <dbReference type="ChEBI" id="CHEBI:49883"/>
    </ligand>
</feature>
<accession>Q5B2Q1</accession>
<accession>C8VF52</accession>
<protein>
    <recommendedName>
        <fullName evidence="3">2-(3-amino-3-carboxypropyl)histidine synthase subunit 2</fullName>
    </recommendedName>
    <alternativeName>
        <fullName>Diphthamide biosynthesis protein 2</fullName>
    </alternativeName>
    <alternativeName>
        <fullName evidence="3">Diphtheria toxin resistance protein 2</fullName>
    </alternativeName>
    <alternativeName>
        <fullName evidence="3">S-adenosyl-L-methionine:L-histidine 3-amino-3-carboxypropyltransferase 2</fullName>
    </alternativeName>
</protein>
<sequence>MTTELAAAPVLSTPDDRILEETDPVVPQTNRILSEEELAITYDIERTLKEIRQARYKRIALQFPDEMLPDAPRVFQLLSRGLEARDIVDGGSKANTETEPTDGLVDSASRLDLKDADEWSPKLYILADTSYGTCCVDEVAAEHVDADVVVHYGRSCLSPTARLPVIYVFTHKELPLDPVLKAFKETYPDPETKVILAADVTYSDHIPEVYSRLVQEGYSSLFATALVHDPSSVIPNRTVPDSVKEAPESLGNWQLFHISEPPTALLLTLASRVAAIHIYPTDGPAGTDVKPLPASTAMVLRRRYAILTRLSTVPIFGILVNTLSVKNYLHIVDHVRDKIAAAGKKSYMFVVGKLNAAKVANFSEIGGWVVIGCWESSLVDSKDFWKPVITPFELEVALKGDEERVWTGAWQSDFQSILDQPPPSSNSPGNSQEANEGPEFGDHARDEDEDAMSEPESAPPEFDLRTGRYVSYSRPMRDSAPRVSASQGATAAISAQTGAADGPSAARALARRAKGDLAMVGNTFSPGAEFLRSQRTWTGLGSDFNSAANVEYDDEENDSTLVVQGRKGIARGYTVGDSIDRH</sequence>
<dbReference type="EMBL" id="AACD01000089">
    <property type="protein sequence ID" value="EAA62360.1"/>
    <property type="molecule type" value="Genomic_DNA"/>
</dbReference>
<dbReference type="EMBL" id="BN001305">
    <property type="protein sequence ID" value="CBF81026.1"/>
    <property type="molecule type" value="Genomic_DNA"/>
</dbReference>
<dbReference type="RefSeq" id="XP_662783.1">
    <property type="nucleotide sequence ID" value="XM_657691.1"/>
</dbReference>
<dbReference type="SMR" id="Q5B2Q1"/>
<dbReference type="FunCoup" id="Q5B2Q1">
    <property type="interactions" value="921"/>
</dbReference>
<dbReference type="STRING" id="227321.Q5B2Q1"/>
<dbReference type="EnsemblFungi" id="CBF81026">
    <property type="protein sequence ID" value="CBF81026"/>
    <property type="gene ID" value="ANIA_05179"/>
</dbReference>
<dbReference type="KEGG" id="ani:ANIA_05179"/>
<dbReference type="eggNOG" id="KOG2648">
    <property type="taxonomic scope" value="Eukaryota"/>
</dbReference>
<dbReference type="HOGENOM" id="CLU_015210_1_1_1"/>
<dbReference type="InParanoid" id="Q5B2Q1"/>
<dbReference type="OMA" id="QIWNENH"/>
<dbReference type="OrthoDB" id="449241at2759"/>
<dbReference type="UniPathway" id="UPA00559"/>
<dbReference type="Proteomes" id="UP000000560">
    <property type="component" value="Chromosome V"/>
</dbReference>
<dbReference type="GO" id="GO:0120513">
    <property type="term" value="C:2-(3-amino-3-carboxypropyl)histidine synthase complex"/>
    <property type="evidence" value="ECO:0000250"/>
    <property type="project" value="UniProtKB"/>
</dbReference>
<dbReference type="GO" id="GO:0005737">
    <property type="term" value="C:cytoplasm"/>
    <property type="evidence" value="ECO:0007669"/>
    <property type="project" value="UniProtKB-SubCell"/>
</dbReference>
<dbReference type="GO" id="GO:0090560">
    <property type="term" value="F:2-(3-amino-3-carboxypropyl)histidine synthase activity"/>
    <property type="evidence" value="ECO:0007669"/>
    <property type="project" value="UniProtKB-EC"/>
</dbReference>
<dbReference type="GO" id="GO:0051539">
    <property type="term" value="F:4 iron, 4 sulfur cluster binding"/>
    <property type="evidence" value="ECO:0000250"/>
    <property type="project" value="UniProtKB"/>
</dbReference>
<dbReference type="GO" id="GO:0046872">
    <property type="term" value="F:metal ion binding"/>
    <property type="evidence" value="ECO:0007669"/>
    <property type="project" value="UniProtKB-KW"/>
</dbReference>
<dbReference type="GO" id="GO:0017183">
    <property type="term" value="P:protein histidyl modification to diphthamide"/>
    <property type="evidence" value="ECO:0000250"/>
    <property type="project" value="UniProtKB"/>
</dbReference>
<dbReference type="FunFam" id="3.40.50.11860:FF:000001">
    <property type="entry name" value="2-(3-amino-3-carboxypropyl)histidine synthase subunit 2"/>
    <property type="match status" value="1"/>
</dbReference>
<dbReference type="Gene3D" id="3.40.50.11840">
    <property type="entry name" value="Diphthamide synthesis DPH1/DPH2 domain 1"/>
    <property type="match status" value="1"/>
</dbReference>
<dbReference type="Gene3D" id="3.40.50.11860">
    <property type="entry name" value="Diphthamide synthesis DPH1/DPH2 domain 3"/>
    <property type="match status" value="1"/>
</dbReference>
<dbReference type="InterPro" id="IPR010014">
    <property type="entry name" value="DHP2"/>
</dbReference>
<dbReference type="InterPro" id="IPR016435">
    <property type="entry name" value="DPH1/DPH2"/>
</dbReference>
<dbReference type="InterPro" id="IPR042263">
    <property type="entry name" value="DPH1/DPH2_1"/>
</dbReference>
<dbReference type="InterPro" id="IPR042265">
    <property type="entry name" value="DPH1/DPH2_3"/>
</dbReference>
<dbReference type="NCBIfam" id="TIGR00322">
    <property type="entry name" value="diphth2_R"/>
    <property type="match status" value="1"/>
</dbReference>
<dbReference type="NCBIfam" id="TIGR00272">
    <property type="entry name" value="DPH2"/>
    <property type="match status" value="1"/>
</dbReference>
<dbReference type="PANTHER" id="PTHR10762:SF2">
    <property type="entry name" value="2-(3-AMINO-3-CARBOXYPROPYL)HISTIDINE SYNTHASE SUBUNIT 2"/>
    <property type="match status" value="1"/>
</dbReference>
<dbReference type="PANTHER" id="PTHR10762">
    <property type="entry name" value="DIPHTHAMIDE BIOSYNTHESIS PROTEIN"/>
    <property type="match status" value="1"/>
</dbReference>
<dbReference type="Pfam" id="PF01866">
    <property type="entry name" value="Diphthamide_syn"/>
    <property type="match status" value="1"/>
</dbReference>
<dbReference type="SFLD" id="SFLDG01121">
    <property type="entry name" value="Diphthamide_biosynthesis"/>
    <property type="match status" value="1"/>
</dbReference>
<dbReference type="SFLD" id="SFLDF00408">
    <property type="entry name" value="Diphthamide_biosynthesis_famil"/>
    <property type="match status" value="1"/>
</dbReference>
<dbReference type="SFLD" id="SFLDS00032">
    <property type="entry name" value="Radical_SAM_3-amino-3-carboxyp"/>
    <property type="match status" value="1"/>
</dbReference>
<name>DPH2_EMENI</name>
<keyword id="KW-0963">Cytoplasm</keyword>
<keyword id="KW-0408">Iron</keyword>
<keyword id="KW-0411">Iron-sulfur</keyword>
<keyword id="KW-0479">Metal-binding</keyword>
<keyword id="KW-1185">Reference proteome</keyword>
<proteinExistence type="inferred from homology"/>